<protein>
    <recommendedName>
        <fullName>Flagella basal body P-ring formation protein FlgA</fullName>
    </recommendedName>
</protein>
<proteinExistence type="inferred from homology"/>
<feature type="signal peptide" evidence="2">
    <location>
        <begin position="1"/>
        <end position="26"/>
    </location>
</feature>
<feature type="chain" id="PRO_0000009343" description="Flagella basal body P-ring formation protein FlgA">
    <location>
        <begin position="27"/>
        <end position="224"/>
    </location>
</feature>
<dbReference type="EMBL" id="Z48169">
    <property type="protein sequence ID" value="CAA88191.1"/>
    <property type="molecule type" value="Genomic_DNA"/>
</dbReference>
<dbReference type="PIR" id="S54218">
    <property type="entry name" value="S54218"/>
</dbReference>
<dbReference type="RefSeq" id="WP_032904686.1">
    <property type="nucleotide sequence ID" value="NZ_UHIX01000001.1"/>
</dbReference>
<dbReference type="SMR" id="Q56892"/>
<dbReference type="STRING" id="1443113.LC20_02155"/>
<dbReference type="KEGG" id="yet:CH48_3306"/>
<dbReference type="PATRIC" id="fig|630.129.peg.1662"/>
<dbReference type="GO" id="GO:0042597">
    <property type="term" value="C:periplasmic space"/>
    <property type="evidence" value="ECO:0007669"/>
    <property type="project" value="UniProtKB-SubCell"/>
</dbReference>
<dbReference type="GO" id="GO:0044780">
    <property type="term" value="P:bacterial-type flagellum assembly"/>
    <property type="evidence" value="ECO:0007669"/>
    <property type="project" value="InterPro"/>
</dbReference>
<dbReference type="CDD" id="cd11614">
    <property type="entry name" value="SAF_CpaB_FlgA_like"/>
    <property type="match status" value="1"/>
</dbReference>
<dbReference type="Gene3D" id="2.30.30.760">
    <property type="match status" value="1"/>
</dbReference>
<dbReference type="Gene3D" id="3.90.1210.10">
    <property type="entry name" value="Antifreeze-like/N-acetylneuraminic acid synthase C-terminal domain"/>
    <property type="match status" value="1"/>
</dbReference>
<dbReference type="InterPro" id="IPR017585">
    <property type="entry name" value="Flag_basal_body_FlgA_C"/>
</dbReference>
<dbReference type="InterPro" id="IPR039246">
    <property type="entry name" value="Flagellar_FlgA"/>
</dbReference>
<dbReference type="InterPro" id="IPR041231">
    <property type="entry name" value="FlgA_N"/>
</dbReference>
<dbReference type="InterPro" id="IPR013974">
    <property type="entry name" value="SAF"/>
</dbReference>
<dbReference type="NCBIfam" id="TIGR03170">
    <property type="entry name" value="flgA_cterm"/>
    <property type="match status" value="1"/>
</dbReference>
<dbReference type="PANTHER" id="PTHR36307">
    <property type="entry name" value="FLAGELLA BASAL BODY P-RING FORMATION PROTEIN FLGA"/>
    <property type="match status" value="1"/>
</dbReference>
<dbReference type="PANTHER" id="PTHR36307:SF1">
    <property type="entry name" value="FLAGELLA BASAL BODY P-RING FORMATION PROTEIN FLGA"/>
    <property type="match status" value="1"/>
</dbReference>
<dbReference type="Pfam" id="PF13144">
    <property type="entry name" value="ChapFlgA"/>
    <property type="match status" value="1"/>
</dbReference>
<dbReference type="Pfam" id="PF17656">
    <property type="entry name" value="ChapFlgA_N"/>
    <property type="match status" value="1"/>
</dbReference>
<dbReference type="SMART" id="SM00858">
    <property type="entry name" value="SAF"/>
    <property type="match status" value="1"/>
</dbReference>
<comment type="function">
    <text evidence="1">Involved in the assembly process of the P-ring formation. It may associate with FlgF on the rod constituting a structure essential for the P-ring assembly or may act as a modulator protein for the P-ring assembly (By similarity).</text>
</comment>
<comment type="subcellular location">
    <subcellularLocation>
        <location evidence="3">Periplasm</location>
    </subcellularLocation>
</comment>
<comment type="similarity">
    <text evidence="3">Belongs to the FlgA family.</text>
</comment>
<evidence type="ECO:0000250" key="1"/>
<evidence type="ECO:0000255" key="2"/>
<evidence type="ECO:0000305" key="3"/>
<keyword id="KW-1005">Bacterial flagellum biogenesis</keyword>
<keyword id="KW-0574">Periplasm</keyword>
<keyword id="KW-0732">Signal</keyword>
<organism>
    <name type="scientific">Yersinia enterocolitica</name>
    <dbReference type="NCBI Taxonomy" id="630"/>
    <lineage>
        <taxon>Bacteria</taxon>
        <taxon>Pseudomonadati</taxon>
        <taxon>Pseudomonadota</taxon>
        <taxon>Gammaproteobacteria</taxon>
        <taxon>Enterobacterales</taxon>
        <taxon>Yersiniaceae</taxon>
        <taxon>Yersinia</taxon>
    </lineage>
</organism>
<sequence length="224" mass="24351">MNRNGVITCALGGLLLSQAATHQAMAADLSVQVNQFFQQQYPDKESQVKVVIKTPQNQWPQCDMPEITLPANARPWGNISLSVRCDGVRRFIQTQVQVSGHYAVAARQLAAGEKMTLQDIKMKQGRLDTLPPGALLEPNFAQGAVSLRQINAGQPLTRNMLRRLWIIKAGQDVQVLALGEGFNVNSNGKAMNNAAIQDNVRVRMASGQIVSGTVADDGTVHILL</sequence>
<gene>
    <name type="primary">flgA</name>
</gene>
<reference key="1">
    <citation type="submission" date="1995-05" db="EMBL/GenBank/DDBJ databases">
        <authorList>
            <person name="Fauconnier A."/>
            <person name="Allaoui A."/>
            <person name="van Elsen A."/>
            <person name="Cornelis G."/>
            <person name="Bollen A."/>
        </authorList>
    </citation>
    <scope>NUCLEOTIDE SEQUENCE [GENOMIC DNA]</scope>
    <source>
        <strain>W1024 / Serotype O:9</strain>
    </source>
</reference>
<accession>Q56892</accession>
<name>FLGA_YEREN</name>